<keyword id="KW-0687">Ribonucleoprotein</keyword>
<keyword id="KW-0689">Ribosomal protein</keyword>
<dbReference type="EMBL" id="CP000526">
    <property type="protein sequence ID" value="ABM52719.1"/>
    <property type="molecule type" value="Genomic_DNA"/>
</dbReference>
<dbReference type="RefSeq" id="WP_004189360.1">
    <property type="nucleotide sequence ID" value="NC_008785.1"/>
</dbReference>
<dbReference type="SMR" id="A1V6J1"/>
<dbReference type="GeneID" id="93061076"/>
<dbReference type="KEGG" id="bmv:BMASAVP1_A2542"/>
<dbReference type="HOGENOM" id="CLU_103507_1_0_4"/>
<dbReference type="GO" id="GO:0022625">
    <property type="term" value="C:cytosolic large ribosomal subunit"/>
    <property type="evidence" value="ECO:0007669"/>
    <property type="project" value="TreeGrafter"/>
</dbReference>
<dbReference type="GO" id="GO:0003735">
    <property type="term" value="F:structural constituent of ribosome"/>
    <property type="evidence" value="ECO:0007669"/>
    <property type="project" value="InterPro"/>
</dbReference>
<dbReference type="GO" id="GO:0006412">
    <property type="term" value="P:translation"/>
    <property type="evidence" value="ECO:0007669"/>
    <property type="project" value="UniProtKB-UniRule"/>
</dbReference>
<dbReference type="FunFam" id="2.30.30.790:FF:000001">
    <property type="entry name" value="50S ribosomal protein L19"/>
    <property type="match status" value="1"/>
</dbReference>
<dbReference type="Gene3D" id="2.30.30.790">
    <property type="match status" value="1"/>
</dbReference>
<dbReference type="HAMAP" id="MF_00402">
    <property type="entry name" value="Ribosomal_bL19"/>
    <property type="match status" value="1"/>
</dbReference>
<dbReference type="InterPro" id="IPR001857">
    <property type="entry name" value="Ribosomal_bL19"/>
</dbReference>
<dbReference type="InterPro" id="IPR018257">
    <property type="entry name" value="Ribosomal_bL19_CS"/>
</dbReference>
<dbReference type="InterPro" id="IPR038657">
    <property type="entry name" value="Ribosomal_bL19_sf"/>
</dbReference>
<dbReference type="InterPro" id="IPR008991">
    <property type="entry name" value="Translation_prot_SH3-like_sf"/>
</dbReference>
<dbReference type="NCBIfam" id="TIGR01024">
    <property type="entry name" value="rplS_bact"/>
    <property type="match status" value="1"/>
</dbReference>
<dbReference type="PANTHER" id="PTHR15680:SF9">
    <property type="entry name" value="LARGE RIBOSOMAL SUBUNIT PROTEIN BL19M"/>
    <property type="match status" value="1"/>
</dbReference>
<dbReference type="PANTHER" id="PTHR15680">
    <property type="entry name" value="RIBOSOMAL PROTEIN L19"/>
    <property type="match status" value="1"/>
</dbReference>
<dbReference type="Pfam" id="PF01245">
    <property type="entry name" value="Ribosomal_L19"/>
    <property type="match status" value="1"/>
</dbReference>
<dbReference type="PIRSF" id="PIRSF002191">
    <property type="entry name" value="Ribosomal_L19"/>
    <property type="match status" value="1"/>
</dbReference>
<dbReference type="PRINTS" id="PR00061">
    <property type="entry name" value="RIBOSOMALL19"/>
</dbReference>
<dbReference type="SUPFAM" id="SSF50104">
    <property type="entry name" value="Translation proteins SH3-like domain"/>
    <property type="match status" value="1"/>
</dbReference>
<dbReference type="PROSITE" id="PS01015">
    <property type="entry name" value="RIBOSOMAL_L19"/>
    <property type="match status" value="1"/>
</dbReference>
<gene>
    <name evidence="1" type="primary">rplS</name>
    <name type="ordered locus">BMASAVP1_A2542</name>
</gene>
<proteinExistence type="inferred from homology"/>
<comment type="function">
    <text evidence="1">This protein is located at the 30S-50S ribosomal subunit interface and may play a role in the structure and function of the aminoacyl-tRNA binding site.</text>
</comment>
<comment type="similarity">
    <text evidence="1">Belongs to the bacterial ribosomal protein bL19 family.</text>
</comment>
<sequence length="129" mass="14429">MNLIAKLEQEEIERALAGKTIPEFAPGDTVIVNVNVVEGNRKRVQAYEGVVIAKRNRGLNSSFIVRKISSGEGVERTFQTYSPLLASIVVKRRGDVRRAKLYYLRERSGKSARIKEKLVSKDRAAAAQQ</sequence>
<reference key="1">
    <citation type="journal article" date="2010" name="Genome Biol. Evol.">
        <title>Continuing evolution of Burkholderia mallei through genome reduction and large-scale rearrangements.</title>
        <authorList>
            <person name="Losada L."/>
            <person name="Ronning C.M."/>
            <person name="DeShazer D."/>
            <person name="Woods D."/>
            <person name="Fedorova N."/>
            <person name="Kim H.S."/>
            <person name="Shabalina S.A."/>
            <person name="Pearson T.R."/>
            <person name="Brinkac L."/>
            <person name="Tan P."/>
            <person name="Nandi T."/>
            <person name="Crabtree J."/>
            <person name="Badger J."/>
            <person name="Beckstrom-Sternberg S."/>
            <person name="Saqib M."/>
            <person name="Schutzer S.E."/>
            <person name="Keim P."/>
            <person name="Nierman W.C."/>
        </authorList>
    </citation>
    <scope>NUCLEOTIDE SEQUENCE [LARGE SCALE GENOMIC DNA]</scope>
    <source>
        <strain>SAVP1</strain>
    </source>
</reference>
<organism>
    <name type="scientific">Burkholderia mallei (strain SAVP1)</name>
    <dbReference type="NCBI Taxonomy" id="320388"/>
    <lineage>
        <taxon>Bacteria</taxon>
        <taxon>Pseudomonadati</taxon>
        <taxon>Pseudomonadota</taxon>
        <taxon>Betaproteobacteria</taxon>
        <taxon>Burkholderiales</taxon>
        <taxon>Burkholderiaceae</taxon>
        <taxon>Burkholderia</taxon>
        <taxon>pseudomallei group</taxon>
    </lineage>
</organism>
<protein>
    <recommendedName>
        <fullName evidence="1">Large ribosomal subunit protein bL19</fullName>
    </recommendedName>
    <alternativeName>
        <fullName evidence="2">50S ribosomal protein L19</fullName>
    </alternativeName>
</protein>
<feature type="chain" id="PRO_1000049646" description="Large ribosomal subunit protein bL19">
    <location>
        <begin position="1"/>
        <end position="129"/>
    </location>
</feature>
<name>RL19_BURMS</name>
<accession>A1V6J1</accession>
<evidence type="ECO:0000255" key="1">
    <source>
        <dbReference type="HAMAP-Rule" id="MF_00402"/>
    </source>
</evidence>
<evidence type="ECO:0000305" key="2"/>